<name>YUSG_BACSU</name>
<protein>
    <recommendedName>
        <fullName>Uncharacterized protein YusG</fullName>
    </recommendedName>
</protein>
<sequence>MAFDKQKLDVTNDVTGRFQNGRLSLYHDNEMIGQMTSMNEYELKSGYSFENEKFYKTADVVSGDDAKYVDCDYENGWC</sequence>
<gene>
    <name type="primary">yusG</name>
    <name type="ordered locus">BSU32790</name>
</gene>
<feature type="chain" id="PRO_0000049924" description="Uncharacterized protein YusG">
    <location>
        <begin position="1"/>
        <end position="78"/>
    </location>
</feature>
<organism>
    <name type="scientific">Bacillus subtilis (strain 168)</name>
    <dbReference type="NCBI Taxonomy" id="224308"/>
    <lineage>
        <taxon>Bacteria</taxon>
        <taxon>Bacillati</taxon>
        <taxon>Bacillota</taxon>
        <taxon>Bacilli</taxon>
        <taxon>Bacillales</taxon>
        <taxon>Bacillaceae</taxon>
        <taxon>Bacillus</taxon>
    </lineage>
</organism>
<keyword id="KW-1185">Reference proteome</keyword>
<reference key="1">
    <citation type="journal article" date="1997" name="Nature">
        <title>The complete genome sequence of the Gram-positive bacterium Bacillus subtilis.</title>
        <authorList>
            <person name="Kunst F."/>
            <person name="Ogasawara N."/>
            <person name="Moszer I."/>
            <person name="Albertini A.M."/>
            <person name="Alloni G."/>
            <person name="Azevedo V."/>
            <person name="Bertero M.G."/>
            <person name="Bessieres P."/>
            <person name="Bolotin A."/>
            <person name="Borchert S."/>
            <person name="Borriss R."/>
            <person name="Boursier L."/>
            <person name="Brans A."/>
            <person name="Braun M."/>
            <person name="Brignell S.C."/>
            <person name="Bron S."/>
            <person name="Brouillet S."/>
            <person name="Bruschi C.V."/>
            <person name="Caldwell B."/>
            <person name="Capuano V."/>
            <person name="Carter N.M."/>
            <person name="Choi S.-K."/>
            <person name="Codani J.-J."/>
            <person name="Connerton I.F."/>
            <person name="Cummings N.J."/>
            <person name="Daniel R.A."/>
            <person name="Denizot F."/>
            <person name="Devine K.M."/>
            <person name="Duesterhoeft A."/>
            <person name="Ehrlich S.D."/>
            <person name="Emmerson P.T."/>
            <person name="Entian K.-D."/>
            <person name="Errington J."/>
            <person name="Fabret C."/>
            <person name="Ferrari E."/>
            <person name="Foulger D."/>
            <person name="Fritz C."/>
            <person name="Fujita M."/>
            <person name="Fujita Y."/>
            <person name="Fuma S."/>
            <person name="Galizzi A."/>
            <person name="Galleron N."/>
            <person name="Ghim S.-Y."/>
            <person name="Glaser P."/>
            <person name="Goffeau A."/>
            <person name="Golightly E.J."/>
            <person name="Grandi G."/>
            <person name="Guiseppi G."/>
            <person name="Guy B.J."/>
            <person name="Haga K."/>
            <person name="Haiech J."/>
            <person name="Harwood C.R."/>
            <person name="Henaut A."/>
            <person name="Hilbert H."/>
            <person name="Holsappel S."/>
            <person name="Hosono S."/>
            <person name="Hullo M.-F."/>
            <person name="Itaya M."/>
            <person name="Jones L.-M."/>
            <person name="Joris B."/>
            <person name="Karamata D."/>
            <person name="Kasahara Y."/>
            <person name="Klaerr-Blanchard M."/>
            <person name="Klein C."/>
            <person name="Kobayashi Y."/>
            <person name="Koetter P."/>
            <person name="Koningstein G."/>
            <person name="Krogh S."/>
            <person name="Kumano M."/>
            <person name="Kurita K."/>
            <person name="Lapidus A."/>
            <person name="Lardinois S."/>
            <person name="Lauber J."/>
            <person name="Lazarevic V."/>
            <person name="Lee S.-M."/>
            <person name="Levine A."/>
            <person name="Liu H."/>
            <person name="Masuda S."/>
            <person name="Mauel C."/>
            <person name="Medigue C."/>
            <person name="Medina N."/>
            <person name="Mellado R.P."/>
            <person name="Mizuno M."/>
            <person name="Moestl D."/>
            <person name="Nakai S."/>
            <person name="Noback M."/>
            <person name="Noone D."/>
            <person name="O'Reilly M."/>
            <person name="Ogawa K."/>
            <person name="Ogiwara A."/>
            <person name="Oudega B."/>
            <person name="Park S.-H."/>
            <person name="Parro V."/>
            <person name="Pohl T.M."/>
            <person name="Portetelle D."/>
            <person name="Porwollik S."/>
            <person name="Prescott A.M."/>
            <person name="Presecan E."/>
            <person name="Pujic P."/>
            <person name="Purnelle B."/>
            <person name="Rapoport G."/>
            <person name="Rey M."/>
            <person name="Reynolds S."/>
            <person name="Rieger M."/>
            <person name="Rivolta C."/>
            <person name="Rocha E."/>
            <person name="Roche B."/>
            <person name="Rose M."/>
            <person name="Sadaie Y."/>
            <person name="Sato T."/>
            <person name="Scanlan E."/>
            <person name="Schleich S."/>
            <person name="Schroeter R."/>
            <person name="Scoffone F."/>
            <person name="Sekiguchi J."/>
            <person name="Sekowska A."/>
            <person name="Seror S.J."/>
            <person name="Serror P."/>
            <person name="Shin B.-S."/>
            <person name="Soldo B."/>
            <person name="Sorokin A."/>
            <person name="Tacconi E."/>
            <person name="Takagi T."/>
            <person name="Takahashi H."/>
            <person name="Takemaru K."/>
            <person name="Takeuchi M."/>
            <person name="Tamakoshi A."/>
            <person name="Tanaka T."/>
            <person name="Terpstra P."/>
            <person name="Tognoni A."/>
            <person name="Tosato V."/>
            <person name="Uchiyama S."/>
            <person name="Vandenbol M."/>
            <person name="Vannier F."/>
            <person name="Vassarotti A."/>
            <person name="Viari A."/>
            <person name="Wambutt R."/>
            <person name="Wedler E."/>
            <person name="Wedler H."/>
            <person name="Weitzenegger T."/>
            <person name="Winters P."/>
            <person name="Wipat A."/>
            <person name="Yamamoto H."/>
            <person name="Yamane K."/>
            <person name="Yasumoto K."/>
            <person name="Yata K."/>
            <person name="Yoshida K."/>
            <person name="Yoshikawa H.-F."/>
            <person name="Zumstein E."/>
            <person name="Yoshikawa H."/>
            <person name="Danchin A."/>
        </authorList>
    </citation>
    <scope>NUCLEOTIDE SEQUENCE [LARGE SCALE GENOMIC DNA]</scope>
    <source>
        <strain>168</strain>
    </source>
</reference>
<dbReference type="EMBL" id="AL009126">
    <property type="protein sequence ID" value="CAB15268.1"/>
    <property type="molecule type" value="Genomic_DNA"/>
</dbReference>
<dbReference type="PIR" id="H70020">
    <property type="entry name" value="H70020"/>
</dbReference>
<dbReference type="RefSeq" id="NP_391158.1">
    <property type="nucleotide sequence ID" value="NC_000964.3"/>
</dbReference>
<dbReference type="RefSeq" id="WP_003228581.1">
    <property type="nucleotide sequence ID" value="NZ_OZ025638.1"/>
</dbReference>
<dbReference type="SMR" id="O32173"/>
<dbReference type="FunCoup" id="O32173">
    <property type="interactions" value="29"/>
</dbReference>
<dbReference type="STRING" id="224308.BSU32790"/>
<dbReference type="PaxDb" id="224308-BSU32790"/>
<dbReference type="EnsemblBacteria" id="CAB15268">
    <property type="protein sequence ID" value="CAB15268"/>
    <property type="gene ID" value="BSU_32790"/>
</dbReference>
<dbReference type="GeneID" id="936719"/>
<dbReference type="KEGG" id="bsu:BSU32790"/>
<dbReference type="PATRIC" id="fig|224308.179.peg.3553"/>
<dbReference type="eggNOG" id="ENOG5033KRT">
    <property type="taxonomic scope" value="Bacteria"/>
</dbReference>
<dbReference type="InParanoid" id="O32173"/>
<dbReference type="OrthoDB" id="2876840at2"/>
<dbReference type="BioCyc" id="BSUB:BSU32790-MONOMER"/>
<dbReference type="Proteomes" id="UP000001570">
    <property type="component" value="Chromosome"/>
</dbReference>
<dbReference type="InterPro" id="IPR020140">
    <property type="entry name" value="Uncharacterised_YusG"/>
</dbReference>
<dbReference type="Pfam" id="PF10830">
    <property type="entry name" value="DUF2553"/>
    <property type="match status" value="1"/>
</dbReference>
<proteinExistence type="predicted"/>
<accession>O32173</accession>